<name>KATG_POLAQ</name>
<accession>A4T0J1</accession>
<evidence type="ECO:0000255" key="1">
    <source>
        <dbReference type="HAMAP-Rule" id="MF_01961"/>
    </source>
</evidence>
<dbReference type="EC" id="1.11.1.21" evidence="1"/>
<dbReference type="EMBL" id="CP000655">
    <property type="protein sequence ID" value="ABP35255.1"/>
    <property type="molecule type" value="Genomic_DNA"/>
</dbReference>
<dbReference type="RefSeq" id="WP_011903878.1">
    <property type="nucleotide sequence ID" value="NC_009379.1"/>
</dbReference>
<dbReference type="SMR" id="A4T0J1"/>
<dbReference type="GeneID" id="31482435"/>
<dbReference type="KEGG" id="pnu:Pnuc_2044"/>
<dbReference type="eggNOG" id="COG0376">
    <property type="taxonomic scope" value="Bacteria"/>
</dbReference>
<dbReference type="HOGENOM" id="CLU_025424_2_0_4"/>
<dbReference type="Proteomes" id="UP000000231">
    <property type="component" value="Chromosome"/>
</dbReference>
<dbReference type="GO" id="GO:0005829">
    <property type="term" value="C:cytosol"/>
    <property type="evidence" value="ECO:0007669"/>
    <property type="project" value="TreeGrafter"/>
</dbReference>
<dbReference type="GO" id="GO:0004096">
    <property type="term" value="F:catalase activity"/>
    <property type="evidence" value="ECO:0007669"/>
    <property type="project" value="UniProtKB-UniRule"/>
</dbReference>
<dbReference type="GO" id="GO:0020037">
    <property type="term" value="F:heme binding"/>
    <property type="evidence" value="ECO:0007669"/>
    <property type="project" value="InterPro"/>
</dbReference>
<dbReference type="GO" id="GO:0046872">
    <property type="term" value="F:metal ion binding"/>
    <property type="evidence" value="ECO:0007669"/>
    <property type="project" value="UniProtKB-KW"/>
</dbReference>
<dbReference type="GO" id="GO:0070301">
    <property type="term" value="P:cellular response to hydrogen peroxide"/>
    <property type="evidence" value="ECO:0007669"/>
    <property type="project" value="TreeGrafter"/>
</dbReference>
<dbReference type="GO" id="GO:0042744">
    <property type="term" value="P:hydrogen peroxide catabolic process"/>
    <property type="evidence" value="ECO:0007669"/>
    <property type="project" value="UniProtKB-KW"/>
</dbReference>
<dbReference type="CDD" id="cd00649">
    <property type="entry name" value="catalase_peroxidase_1"/>
    <property type="match status" value="1"/>
</dbReference>
<dbReference type="CDD" id="cd08200">
    <property type="entry name" value="catalase_peroxidase_2"/>
    <property type="match status" value="1"/>
</dbReference>
<dbReference type="FunFam" id="1.10.420.10:FF:000004">
    <property type="entry name" value="Catalase-peroxidase"/>
    <property type="match status" value="1"/>
</dbReference>
<dbReference type="FunFam" id="1.10.520.10:FF:000002">
    <property type="entry name" value="Catalase-peroxidase"/>
    <property type="match status" value="1"/>
</dbReference>
<dbReference type="Gene3D" id="1.10.520.10">
    <property type="match status" value="2"/>
</dbReference>
<dbReference type="Gene3D" id="1.10.420.10">
    <property type="entry name" value="Peroxidase, domain 2"/>
    <property type="match status" value="2"/>
</dbReference>
<dbReference type="HAMAP" id="MF_01961">
    <property type="entry name" value="Catal_peroxid"/>
    <property type="match status" value="1"/>
</dbReference>
<dbReference type="InterPro" id="IPR000763">
    <property type="entry name" value="Catalase_peroxidase"/>
</dbReference>
<dbReference type="InterPro" id="IPR002016">
    <property type="entry name" value="Haem_peroxidase"/>
</dbReference>
<dbReference type="InterPro" id="IPR010255">
    <property type="entry name" value="Haem_peroxidase_sf"/>
</dbReference>
<dbReference type="InterPro" id="IPR019794">
    <property type="entry name" value="Peroxidases_AS"/>
</dbReference>
<dbReference type="NCBIfam" id="TIGR00198">
    <property type="entry name" value="cat_per_HPI"/>
    <property type="match status" value="1"/>
</dbReference>
<dbReference type="NCBIfam" id="NF011635">
    <property type="entry name" value="PRK15061.1"/>
    <property type="match status" value="1"/>
</dbReference>
<dbReference type="PANTHER" id="PTHR30555:SF6">
    <property type="entry name" value="CATALASE-PEROXIDASE"/>
    <property type="match status" value="1"/>
</dbReference>
<dbReference type="PANTHER" id="PTHR30555">
    <property type="entry name" value="HYDROPEROXIDASE I, BIFUNCTIONAL CATALASE-PEROXIDASE"/>
    <property type="match status" value="1"/>
</dbReference>
<dbReference type="Pfam" id="PF00141">
    <property type="entry name" value="peroxidase"/>
    <property type="match status" value="2"/>
</dbReference>
<dbReference type="PRINTS" id="PR00460">
    <property type="entry name" value="BPEROXIDASE"/>
</dbReference>
<dbReference type="PRINTS" id="PR00458">
    <property type="entry name" value="PEROXIDASE"/>
</dbReference>
<dbReference type="SUPFAM" id="SSF48113">
    <property type="entry name" value="Heme-dependent peroxidases"/>
    <property type="match status" value="2"/>
</dbReference>
<dbReference type="PROSITE" id="PS00436">
    <property type="entry name" value="PEROXIDASE_2"/>
    <property type="match status" value="1"/>
</dbReference>
<dbReference type="PROSITE" id="PS50873">
    <property type="entry name" value="PEROXIDASE_4"/>
    <property type="match status" value="1"/>
</dbReference>
<organism>
    <name type="scientific">Polynucleobacter asymbioticus (strain DSM 18221 / CIP 109841 / QLW-P1DMWA-1)</name>
    <name type="common">Polynucleobacter necessarius subsp. asymbioticus</name>
    <dbReference type="NCBI Taxonomy" id="312153"/>
    <lineage>
        <taxon>Bacteria</taxon>
        <taxon>Pseudomonadati</taxon>
        <taxon>Pseudomonadota</taxon>
        <taxon>Betaproteobacteria</taxon>
        <taxon>Burkholderiales</taxon>
        <taxon>Burkholderiaceae</taxon>
        <taxon>Polynucleobacter</taxon>
    </lineage>
</organism>
<feature type="signal peptide" evidence="1">
    <location>
        <begin position="1"/>
        <end position="12"/>
    </location>
</feature>
<feature type="chain" id="PRO_0000354860" description="Catalase-peroxidase">
    <location>
        <begin position="13"/>
        <end position="717"/>
    </location>
</feature>
<feature type="active site" description="Proton acceptor" evidence="1">
    <location>
        <position position="94"/>
    </location>
</feature>
<feature type="binding site" description="axial binding residue" evidence="1">
    <location>
        <position position="262"/>
    </location>
    <ligand>
        <name>heme b</name>
        <dbReference type="ChEBI" id="CHEBI:60344"/>
    </ligand>
    <ligandPart>
        <name>Fe</name>
        <dbReference type="ChEBI" id="CHEBI:18248"/>
    </ligandPart>
</feature>
<feature type="site" description="Transition state stabilizer" evidence="1">
    <location>
        <position position="90"/>
    </location>
</feature>
<feature type="cross-link" description="Tryptophyl-tyrosyl-methioninium (Trp-Tyr) (with M-247)" evidence="1">
    <location>
        <begin position="93"/>
        <end position="221"/>
    </location>
</feature>
<feature type="cross-link" description="Tryptophyl-tyrosyl-methioninium (Tyr-Met) (with W-93)" evidence="1">
    <location>
        <begin position="221"/>
        <end position="247"/>
    </location>
</feature>
<keyword id="KW-0349">Heme</keyword>
<keyword id="KW-0376">Hydrogen peroxide</keyword>
<keyword id="KW-0408">Iron</keyword>
<keyword id="KW-0479">Metal-binding</keyword>
<keyword id="KW-0560">Oxidoreductase</keyword>
<keyword id="KW-0575">Peroxidase</keyword>
<keyword id="KW-1185">Reference proteome</keyword>
<keyword id="KW-0732">Signal</keyword>
<protein>
    <recommendedName>
        <fullName evidence="1">Catalase-peroxidase</fullName>
        <shortName evidence="1">CP</shortName>
        <ecNumber evidence="1">1.11.1.21</ecNumber>
    </recommendedName>
    <alternativeName>
        <fullName evidence="1">Peroxidase/catalase</fullName>
    </alternativeName>
</protein>
<reference key="1">
    <citation type="journal article" date="2012" name="Stand. Genomic Sci.">
        <title>Complete genome sequence of Polynucleobacter necessarius subsp. asymbioticus type strain (QLW-P1DMWA-1(T)).</title>
        <authorList>
            <person name="Meincke L."/>
            <person name="Copeland A."/>
            <person name="Lapidus A."/>
            <person name="Lucas S."/>
            <person name="Berry K.W."/>
            <person name="Del Rio T.G."/>
            <person name="Hammon N."/>
            <person name="Dalin E."/>
            <person name="Tice H."/>
            <person name="Pitluck S."/>
            <person name="Richardson P."/>
            <person name="Bruce D."/>
            <person name="Goodwin L."/>
            <person name="Han C."/>
            <person name="Tapia R."/>
            <person name="Detter J.C."/>
            <person name="Schmutz J."/>
            <person name="Brettin T."/>
            <person name="Larimer F."/>
            <person name="Land M."/>
            <person name="Hauser L."/>
            <person name="Kyrpides N.C."/>
            <person name="Ivanova N."/>
            <person name="Goker M."/>
            <person name="Woyke T."/>
            <person name="Wu Q.L."/>
            <person name="Pockl M."/>
            <person name="Hahn M.W."/>
            <person name="Klenk H.P."/>
        </authorList>
    </citation>
    <scope>NUCLEOTIDE SEQUENCE [LARGE SCALE GENOMIC DNA]</scope>
    <source>
        <strain>DSM 18221 / CIP 109841 / QLW-P1DMWA-1</strain>
    </source>
</reference>
<gene>
    <name evidence="1" type="primary">katG</name>
    <name type="ordered locus">Pnuc_2044</name>
</gene>
<comment type="function">
    <text evidence="1">Bifunctional enzyme with both catalase and broad-spectrum peroxidase activity.</text>
</comment>
<comment type="catalytic activity">
    <reaction evidence="1">
        <text>H2O2 + AH2 = A + 2 H2O</text>
        <dbReference type="Rhea" id="RHEA:30275"/>
        <dbReference type="ChEBI" id="CHEBI:13193"/>
        <dbReference type="ChEBI" id="CHEBI:15377"/>
        <dbReference type="ChEBI" id="CHEBI:16240"/>
        <dbReference type="ChEBI" id="CHEBI:17499"/>
        <dbReference type="EC" id="1.11.1.21"/>
    </reaction>
</comment>
<comment type="catalytic activity">
    <reaction evidence="1">
        <text>2 H2O2 = O2 + 2 H2O</text>
        <dbReference type="Rhea" id="RHEA:20309"/>
        <dbReference type="ChEBI" id="CHEBI:15377"/>
        <dbReference type="ChEBI" id="CHEBI:15379"/>
        <dbReference type="ChEBI" id="CHEBI:16240"/>
        <dbReference type="EC" id="1.11.1.21"/>
    </reaction>
</comment>
<comment type="cofactor">
    <cofactor evidence="1">
        <name>heme b</name>
        <dbReference type="ChEBI" id="CHEBI:60344"/>
    </cofactor>
    <text evidence="1">Binds 1 heme b (iron(II)-protoporphyrin IX) group per dimer.</text>
</comment>
<comment type="subunit">
    <text evidence="1">Homodimer or homotetramer.</text>
</comment>
<comment type="PTM">
    <text evidence="1">Formation of the three residue Trp-Tyr-Met cross-link is important for the catalase, but not the peroxidase activity of the enzyme.</text>
</comment>
<comment type="similarity">
    <text evidence="1">Belongs to the peroxidase family. Peroxidase/catalase subfamily.</text>
</comment>
<sequence>MTSKGMCPVAHGANTEASETPMAWWPKALNLDILHQQDTKTNPMGSSFSYRDELKKLDVGALKKDMKDLLTNSQDWWPADWGHYGGLMIRMAWHSAGSYRIADGRGGAGTGNQRFAPINSWPDNANLDKARRLLWPIKKKYGNKISWADLMILAGTIAYESMGLKTFGFSFGREDIWHPEKDIYWGSEKEWLQKSGGKGSRYSGERELSNPLAAVMMGLIYVNPEGVDGKPDPLKTAQDMRVTFARMAMNDEETVALTAGGHTVGKAHGNGNAANLGPAPEAAPIDEQGLGWMNHKTRGIGRDAVTSGLEGAWTTHPTQWDNGYFNLLLNYDWKLTESPAGAHQYEPINIKEEDKPVDVEDASIRCMPMMTDADIALKMDPEYRKISERFSKDQAYFSETFAKAWFKLTHRDMGPKARYFGPDVPKEELIWQDPIPSGPKSYDIDAVKAKIKASGLSMSDMVTTAWDSARTFRGSDKRGGANGARIRLAPQKDWMGNEPERLARVLAVYEKIGKECGISIADTIILGGNIGIEQAAKAGGFDVKVPFTSGRGDAIQAMTDVESFEVLEPLADGFRNWLKESYVVTPEELLLDRTQLMGLTAQEMTVLIGGMRVLGTNYGGSKQGVFTEKEGVLSNDFFVNLTDMNYLWKPTGQNSYDIVERNTEKTKWTATRADLVFGSNSILRAYAEVYAQDDNKEKFVNDFIAAWTKVMNADLFN</sequence>
<proteinExistence type="inferred from homology"/>